<proteinExistence type="inferred from homology"/>
<organism>
    <name type="scientific">Salmonella schwarzengrund (strain CVM19633)</name>
    <dbReference type="NCBI Taxonomy" id="439843"/>
    <lineage>
        <taxon>Bacteria</taxon>
        <taxon>Pseudomonadati</taxon>
        <taxon>Pseudomonadota</taxon>
        <taxon>Gammaproteobacteria</taxon>
        <taxon>Enterobacterales</taxon>
        <taxon>Enterobacteriaceae</taxon>
        <taxon>Salmonella</taxon>
    </lineage>
</organism>
<accession>B4TRU9</accession>
<name>YCAR_SALSV</name>
<protein>
    <recommendedName>
        <fullName evidence="1">UPF0434 protein YcaR</fullName>
    </recommendedName>
</protein>
<feature type="chain" id="PRO_1000138334" description="UPF0434 protein YcaR">
    <location>
        <begin position="1"/>
        <end position="60"/>
    </location>
</feature>
<comment type="similarity">
    <text evidence="1">Belongs to the UPF0434 family.</text>
</comment>
<gene>
    <name evidence="1" type="primary">ycaR</name>
    <name type="ordered locus">SeSA_A1101</name>
</gene>
<sequence>MDHRLLEIIACPVCNGKLWYNQEKQELICKLDNLAFPLRDGIPVLLENEARSLTSDESKS</sequence>
<reference key="1">
    <citation type="journal article" date="2011" name="J. Bacteriol.">
        <title>Comparative genomics of 28 Salmonella enterica isolates: evidence for CRISPR-mediated adaptive sublineage evolution.</title>
        <authorList>
            <person name="Fricke W.F."/>
            <person name="Mammel M.K."/>
            <person name="McDermott P.F."/>
            <person name="Tartera C."/>
            <person name="White D.G."/>
            <person name="Leclerc J.E."/>
            <person name="Ravel J."/>
            <person name="Cebula T.A."/>
        </authorList>
    </citation>
    <scope>NUCLEOTIDE SEQUENCE [LARGE SCALE GENOMIC DNA]</scope>
    <source>
        <strain>CVM19633</strain>
    </source>
</reference>
<dbReference type="EMBL" id="CP001127">
    <property type="protein sequence ID" value="ACF88668.1"/>
    <property type="molecule type" value="Genomic_DNA"/>
</dbReference>
<dbReference type="RefSeq" id="WP_000350056.1">
    <property type="nucleotide sequence ID" value="NC_011094.1"/>
</dbReference>
<dbReference type="SMR" id="B4TRU9"/>
<dbReference type="GeneID" id="66755391"/>
<dbReference type="KEGG" id="sew:SeSA_A1101"/>
<dbReference type="HOGENOM" id="CLU_155659_3_1_6"/>
<dbReference type="Proteomes" id="UP000001865">
    <property type="component" value="Chromosome"/>
</dbReference>
<dbReference type="GO" id="GO:0005829">
    <property type="term" value="C:cytosol"/>
    <property type="evidence" value="ECO:0007669"/>
    <property type="project" value="TreeGrafter"/>
</dbReference>
<dbReference type="FunFam" id="2.20.25.10:FF:000002">
    <property type="entry name" value="UPF0434 protein YcaR"/>
    <property type="match status" value="1"/>
</dbReference>
<dbReference type="Gene3D" id="2.20.25.10">
    <property type="match status" value="1"/>
</dbReference>
<dbReference type="HAMAP" id="MF_01187">
    <property type="entry name" value="UPF0434"/>
    <property type="match status" value="1"/>
</dbReference>
<dbReference type="InterPro" id="IPR005651">
    <property type="entry name" value="Trm112-like"/>
</dbReference>
<dbReference type="NCBIfam" id="NF008806">
    <property type="entry name" value="PRK11827.1"/>
    <property type="match status" value="1"/>
</dbReference>
<dbReference type="PANTHER" id="PTHR33505:SF4">
    <property type="entry name" value="PROTEIN PREY, MITOCHONDRIAL"/>
    <property type="match status" value="1"/>
</dbReference>
<dbReference type="PANTHER" id="PTHR33505">
    <property type="entry name" value="ZGC:162634"/>
    <property type="match status" value="1"/>
</dbReference>
<dbReference type="Pfam" id="PF03966">
    <property type="entry name" value="Trm112p"/>
    <property type="match status" value="1"/>
</dbReference>
<dbReference type="SUPFAM" id="SSF158997">
    <property type="entry name" value="Trm112p-like"/>
    <property type="match status" value="1"/>
</dbReference>
<evidence type="ECO:0000255" key="1">
    <source>
        <dbReference type="HAMAP-Rule" id="MF_01187"/>
    </source>
</evidence>